<sequence length="292" mass="32177">MSQDVNELSKQPTPDKAEDNAFFPSPYSLSQYTAPKTDFDGVEHKGAYKDGKWKVLMIAAEERYVLLENGKMFSTGNHPVEMLLPLHHLMEAGFDVDVATLSGYPVKLELWAMPTEDEAVISTYNKLKEKLKQPKKLADVIKNELGPDSDYLSVFIPGGHAAVVGISESEDVQQTLDWALDNDRFIVTLCHGPAALLSAGLNREKSPLEGYSVCVFPDSLDEGANIEIGYLPGRLKWLVADLLTKQGLKVVNDDMTGRTLKDRKLLTGDSPLASNELGKLAVNEMLNAIQNK</sequence>
<accession>A5IQA5</accession>
<organism>
    <name type="scientific">Staphylococcus aureus (strain JH9)</name>
    <dbReference type="NCBI Taxonomy" id="359786"/>
    <lineage>
        <taxon>Bacteria</taxon>
        <taxon>Bacillati</taxon>
        <taxon>Bacillota</taxon>
        <taxon>Bacilli</taxon>
        <taxon>Bacillales</taxon>
        <taxon>Staphylococcaceae</taxon>
        <taxon>Staphylococcus</taxon>
    </lineage>
</organism>
<proteinExistence type="inferred from homology"/>
<reference key="1">
    <citation type="submission" date="2007-05" db="EMBL/GenBank/DDBJ databases">
        <title>Complete sequence of chromosome of Staphylococcus aureus subsp. aureus JH9.</title>
        <authorList>
            <consortium name="US DOE Joint Genome Institute"/>
            <person name="Copeland A."/>
            <person name="Lucas S."/>
            <person name="Lapidus A."/>
            <person name="Barry K."/>
            <person name="Detter J.C."/>
            <person name="Glavina del Rio T."/>
            <person name="Hammon N."/>
            <person name="Israni S."/>
            <person name="Pitluck S."/>
            <person name="Chain P."/>
            <person name="Malfatti S."/>
            <person name="Shin M."/>
            <person name="Vergez L."/>
            <person name="Schmutz J."/>
            <person name="Larimer F."/>
            <person name="Land M."/>
            <person name="Hauser L."/>
            <person name="Kyrpides N."/>
            <person name="Kim E."/>
            <person name="Tomasz A."/>
            <person name="Richardson P."/>
        </authorList>
    </citation>
    <scope>NUCLEOTIDE SEQUENCE [LARGE SCALE GENOMIC DNA]</scope>
    <source>
        <strain>JH9</strain>
    </source>
</reference>
<protein>
    <recommendedName>
        <fullName evidence="1">Protein/nucleic acid deglycase HchA</fullName>
        <ecNumber evidence="1">3.1.2.-</ecNumber>
        <ecNumber evidence="1">3.5.1.-</ecNumber>
        <ecNumber evidence="1">3.5.1.124</ecNumber>
    </recommendedName>
    <alternativeName>
        <fullName evidence="1">Maillard deglycase</fullName>
    </alternativeName>
</protein>
<comment type="function">
    <text evidence="1">Protein and nucleotide deglycase that catalyzes the deglycation of the Maillard adducts formed between amino groups of proteins or nucleotides and reactive carbonyl groups of glyoxals. Thus, functions as a protein deglycase that repairs methylglyoxal- and glyoxal-glycated proteins, and releases repaired proteins and lactate or glycolate, respectively. Deglycates cysteine, arginine and lysine residues in proteins, and thus reactivates these proteins by reversing glycation by glyoxals. Acts on early glycation intermediates (hemithioacetals and aminocarbinols), preventing the formation of Schiff bases and advanced glycation endproducts (AGE). Also functions as a nucleotide deglycase able to repair glycated guanine in the free nucleotide pool (GTP, GDP, GMP, dGTP) and in DNA and RNA. Is thus involved in a major nucleotide repair system named guanine glycation repair (GG repair), dedicated to reversing methylglyoxal and glyoxal damage via nucleotide sanitization and direct nucleic acid repair. Plays an important role in protecting cells from carbonyl stress.</text>
</comment>
<comment type="catalytic activity">
    <reaction evidence="1">
        <text>N(omega)-(1-hydroxy-2-oxopropyl)-L-arginyl-[protein] + H2O = lactate + L-arginyl-[protein] + H(+)</text>
        <dbReference type="Rhea" id="RHEA:49548"/>
        <dbReference type="Rhea" id="RHEA-COMP:10532"/>
        <dbReference type="Rhea" id="RHEA-COMP:12428"/>
        <dbReference type="ChEBI" id="CHEBI:15377"/>
        <dbReference type="ChEBI" id="CHEBI:15378"/>
        <dbReference type="ChEBI" id="CHEBI:24996"/>
        <dbReference type="ChEBI" id="CHEBI:29965"/>
        <dbReference type="ChEBI" id="CHEBI:131708"/>
        <dbReference type="EC" id="3.5.1.124"/>
    </reaction>
</comment>
<comment type="catalytic activity">
    <reaction evidence="1">
        <text>N(6)-(1-hydroxy-2-oxopropyl)-L-lysyl-[protein] + H2O = lactate + L-lysyl-[protein] + H(+)</text>
        <dbReference type="Rhea" id="RHEA:49552"/>
        <dbReference type="Rhea" id="RHEA-COMP:9752"/>
        <dbReference type="Rhea" id="RHEA-COMP:12429"/>
        <dbReference type="ChEBI" id="CHEBI:15377"/>
        <dbReference type="ChEBI" id="CHEBI:15378"/>
        <dbReference type="ChEBI" id="CHEBI:24996"/>
        <dbReference type="ChEBI" id="CHEBI:29969"/>
        <dbReference type="ChEBI" id="CHEBI:131709"/>
        <dbReference type="EC" id="3.5.1.124"/>
    </reaction>
</comment>
<comment type="catalytic activity">
    <reaction evidence="1">
        <text>S-(1-hydroxy-2-oxopropyl)-L-cysteinyl-[protein] + H2O = lactate + L-cysteinyl-[protein] + H(+)</text>
        <dbReference type="Rhea" id="RHEA:49556"/>
        <dbReference type="Rhea" id="RHEA-COMP:10131"/>
        <dbReference type="Rhea" id="RHEA-COMP:12430"/>
        <dbReference type="ChEBI" id="CHEBI:15377"/>
        <dbReference type="ChEBI" id="CHEBI:15378"/>
        <dbReference type="ChEBI" id="CHEBI:24996"/>
        <dbReference type="ChEBI" id="CHEBI:29950"/>
        <dbReference type="ChEBI" id="CHEBI:131710"/>
        <dbReference type="EC" id="3.5.1.124"/>
    </reaction>
</comment>
<comment type="catalytic activity">
    <reaction evidence="1">
        <text>N(omega)-(1-hydroxy-2-oxoethyl)-L-arginyl-[protein] + H2O = L-arginyl-[protein] + glycolate + H(+)</text>
        <dbReference type="Rhea" id="RHEA:57188"/>
        <dbReference type="Rhea" id="RHEA-COMP:10532"/>
        <dbReference type="Rhea" id="RHEA-COMP:14844"/>
        <dbReference type="ChEBI" id="CHEBI:15377"/>
        <dbReference type="ChEBI" id="CHEBI:15378"/>
        <dbReference type="ChEBI" id="CHEBI:29805"/>
        <dbReference type="ChEBI" id="CHEBI:29965"/>
        <dbReference type="ChEBI" id="CHEBI:141553"/>
        <dbReference type="EC" id="3.5.1.124"/>
    </reaction>
</comment>
<comment type="catalytic activity">
    <reaction evidence="1">
        <text>N(6)-(1-hydroxy-2-oxoethyl)-L-lysyl-[protein] + H2O = glycolate + L-lysyl-[protein] + H(+)</text>
        <dbReference type="Rhea" id="RHEA:57192"/>
        <dbReference type="Rhea" id="RHEA-COMP:9752"/>
        <dbReference type="Rhea" id="RHEA-COMP:14845"/>
        <dbReference type="ChEBI" id="CHEBI:15377"/>
        <dbReference type="ChEBI" id="CHEBI:15378"/>
        <dbReference type="ChEBI" id="CHEBI:29805"/>
        <dbReference type="ChEBI" id="CHEBI:29969"/>
        <dbReference type="ChEBI" id="CHEBI:141554"/>
        <dbReference type="EC" id="3.5.1.124"/>
    </reaction>
</comment>
<comment type="catalytic activity">
    <reaction evidence="1">
        <text>S-(1-hydroxy-2-oxoethyl)-L-cysteinyl-[protein] + H2O = glycolate + L-cysteinyl-[protein] + H(+)</text>
        <dbReference type="Rhea" id="RHEA:57196"/>
        <dbReference type="Rhea" id="RHEA-COMP:10131"/>
        <dbReference type="Rhea" id="RHEA-COMP:14846"/>
        <dbReference type="ChEBI" id="CHEBI:15377"/>
        <dbReference type="ChEBI" id="CHEBI:15378"/>
        <dbReference type="ChEBI" id="CHEBI:29805"/>
        <dbReference type="ChEBI" id="CHEBI:29950"/>
        <dbReference type="ChEBI" id="CHEBI:141555"/>
        <dbReference type="EC" id="3.5.1.124"/>
    </reaction>
</comment>
<comment type="catalytic activity">
    <reaction evidence="1">
        <text>N(2)-(1-hydroxy-2-oxopropyl)-dGTP + H2O = lactate + dGTP + H(+)</text>
        <dbReference type="Rhea" id="RHEA:57244"/>
        <dbReference type="ChEBI" id="CHEBI:15377"/>
        <dbReference type="ChEBI" id="CHEBI:15378"/>
        <dbReference type="ChEBI" id="CHEBI:24996"/>
        <dbReference type="ChEBI" id="CHEBI:61429"/>
        <dbReference type="ChEBI" id="CHEBI:141569"/>
    </reaction>
</comment>
<comment type="catalytic activity">
    <reaction evidence="1">
        <text>N(2)-(1-hydroxy-2-oxopropyl)-GTP + H2O = lactate + GTP + H(+)</text>
        <dbReference type="Rhea" id="RHEA:57256"/>
        <dbReference type="ChEBI" id="CHEBI:15377"/>
        <dbReference type="ChEBI" id="CHEBI:15378"/>
        <dbReference type="ChEBI" id="CHEBI:24996"/>
        <dbReference type="ChEBI" id="CHEBI:37565"/>
        <dbReference type="ChEBI" id="CHEBI:141570"/>
    </reaction>
</comment>
<comment type="catalytic activity">
    <reaction evidence="1">
        <text>N(2)-(1-hydroxy-2-oxopropyl)-GDP + H2O = lactate + GDP + H(+)</text>
        <dbReference type="Rhea" id="RHEA:57260"/>
        <dbReference type="ChEBI" id="CHEBI:15377"/>
        <dbReference type="ChEBI" id="CHEBI:15378"/>
        <dbReference type="ChEBI" id="CHEBI:24996"/>
        <dbReference type="ChEBI" id="CHEBI:58189"/>
        <dbReference type="ChEBI" id="CHEBI:141573"/>
    </reaction>
</comment>
<comment type="catalytic activity">
    <reaction evidence="1">
        <text>N(2)-(1-hydroxy-2-oxopropyl)-GMP + H2O = lactate + GMP + H(+)</text>
        <dbReference type="Rhea" id="RHEA:57268"/>
        <dbReference type="ChEBI" id="CHEBI:15377"/>
        <dbReference type="ChEBI" id="CHEBI:15378"/>
        <dbReference type="ChEBI" id="CHEBI:24996"/>
        <dbReference type="ChEBI" id="CHEBI:58115"/>
        <dbReference type="ChEBI" id="CHEBI:141575"/>
    </reaction>
</comment>
<comment type="catalytic activity">
    <reaction evidence="1">
        <text>N(2)-(1-hydroxy-2-oxoethyl)-dGTP + H2O = dGTP + glycolate + H(+)</text>
        <dbReference type="Rhea" id="RHEA:57248"/>
        <dbReference type="ChEBI" id="CHEBI:15377"/>
        <dbReference type="ChEBI" id="CHEBI:15378"/>
        <dbReference type="ChEBI" id="CHEBI:29805"/>
        <dbReference type="ChEBI" id="CHEBI:61429"/>
        <dbReference type="ChEBI" id="CHEBI:141572"/>
    </reaction>
</comment>
<comment type="catalytic activity">
    <reaction evidence="1">
        <text>N(2)-(1-hydroxy-2-oxoethyl)-GTP + H2O = glycolate + GTP + H(+)</text>
        <dbReference type="Rhea" id="RHEA:57252"/>
        <dbReference type="ChEBI" id="CHEBI:15377"/>
        <dbReference type="ChEBI" id="CHEBI:15378"/>
        <dbReference type="ChEBI" id="CHEBI:29805"/>
        <dbReference type="ChEBI" id="CHEBI:37565"/>
        <dbReference type="ChEBI" id="CHEBI:141571"/>
    </reaction>
</comment>
<comment type="catalytic activity">
    <reaction evidence="1">
        <text>N(2)-(1-hydroxy-2-oxoethyl)-GDP + H2O = glycolate + GDP + H(+)</text>
        <dbReference type="Rhea" id="RHEA:57264"/>
        <dbReference type="ChEBI" id="CHEBI:15377"/>
        <dbReference type="ChEBI" id="CHEBI:15378"/>
        <dbReference type="ChEBI" id="CHEBI:29805"/>
        <dbReference type="ChEBI" id="CHEBI:58189"/>
        <dbReference type="ChEBI" id="CHEBI:141574"/>
    </reaction>
</comment>
<comment type="catalytic activity">
    <reaction evidence="1">
        <text>N(2)-(1-hydroxy-2-oxoethyl)-GMP + H2O = glycolate + GMP + H(+)</text>
        <dbReference type="Rhea" id="RHEA:57304"/>
        <dbReference type="ChEBI" id="CHEBI:15377"/>
        <dbReference type="ChEBI" id="CHEBI:15378"/>
        <dbReference type="ChEBI" id="CHEBI:29805"/>
        <dbReference type="ChEBI" id="CHEBI:58115"/>
        <dbReference type="ChEBI" id="CHEBI:141576"/>
    </reaction>
</comment>
<comment type="catalytic activity">
    <reaction evidence="1">
        <text>an N(2)-(1-hydroxy-2-oxopropyl)-guanosine in RNA + H2O = a guanosine in RNA + lactate + H(+)</text>
        <dbReference type="Rhea" id="RHEA:57288"/>
        <dbReference type="Rhea" id="RHEA-COMP:14855"/>
        <dbReference type="Rhea" id="RHEA-COMP:14858"/>
        <dbReference type="ChEBI" id="CHEBI:15377"/>
        <dbReference type="ChEBI" id="CHEBI:15378"/>
        <dbReference type="ChEBI" id="CHEBI:24996"/>
        <dbReference type="ChEBI" id="CHEBI:74269"/>
        <dbReference type="ChEBI" id="CHEBI:141580"/>
    </reaction>
</comment>
<comment type="catalytic activity">
    <reaction evidence="1">
        <text>an N(2)-(1-hydroxy-2-oxopropyl)-2'-deoxyguanosine in DNA + H2O = a 2'-deoxyguanosine in DNA + lactate + H(+)</text>
        <dbReference type="Rhea" id="RHEA:57300"/>
        <dbReference type="Rhea" id="RHEA-COMP:11367"/>
        <dbReference type="Rhea" id="RHEA-COMP:14856"/>
        <dbReference type="ChEBI" id="CHEBI:15377"/>
        <dbReference type="ChEBI" id="CHEBI:15378"/>
        <dbReference type="ChEBI" id="CHEBI:24996"/>
        <dbReference type="ChEBI" id="CHEBI:85445"/>
        <dbReference type="ChEBI" id="CHEBI:141578"/>
    </reaction>
</comment>
<comment type="catalytic activity">
    <reaction evidence="1">
        <text>an N(2)-(1-hydroxy-2-oxoethyl)-guanosine in RNA + H2O = a guanosine in RNA + glycolate + H(+)</text>
        <dbReference type="Rhea" id="RHEA:57292"/>
        <dbReference type="Rhea" id="RHEA-COMP:14855"/>
        <dbReference type="Rhea" id="RHEA-COMP:14859"/>
        <dbReference type="ChEBI" id="CHEBI:15377"/>
        <dbReference type="ChEBI" id="CHEBI:15378"/>
        <dbReference type="ChEBI" id="CHEBI:29805"/>
        <dbReference type="ChEBI" id="CHEBI:74269"/>
        <dbReference type="ChEBI" id="CHEBI:141581"/>
    </reaction>
</comment>
<comment type="catalytic activity">
    <reaction evidence="1">
        <text>an N(2)-(1-hydroxy-2-oxoethyl)-2'-deoxyguanosine in DNA + H2O = a 2'-deoxyguanosine in DNA + glycolate + H(+)</text>
        <dbReference type="Rhea" id="RHEA:57296"/>
        <dbReference type="Rhea" id="RHEA-COMP:11367"/>
        <dbReference type="Rhea" id="RHEA-COMP:14857"/>
        <dbReference type="ChEBI" id="CHEBI:15377"/>
        <dbReference type="ChEBI" id="CHEBI:15378"/>
        <dbReference type="ChEBI" id="CHEBI:29805"/>
        <dbReference type="ChEBI" id="CHEBI:85445"/>
        <dbReference type="ChEBI" id="CHEBI:141579"/>
    </reaction>
</comment>
<comment type="subcellular location">
    <subcellularLocation>
        <location evidence="1">Cytoplasm</location>
    </subcellularLocation>
</comment>
<comment type="similarity">
    <text evidence="1">Belongs to the peptidase C56 family. HchA subfamily.</text>
</comment>
<evidence type="ECO:0000255" key="1">
    <source>
        <dbReference type="HAMAP-Rule" id="MF_01046"/>
    </source>
</evidence>
<evidence type="ECO:0000256" key="2">
    <source>
        <dbReference type="SAM" id="MobiDB-lite"/>
    </source>
</evidence>
<feature type="chain" id="PRO_1000084411" description="Protein/nucleic acid deglycase HchA">
    <location>
        <begin position="1"/>
        <end position="292"/>
    </location>
</feature>
<feature type="region of interest" description="Disordered" evidence="2">
    <location>
        <begin position="1"/>
        <end position="23"/>
    </location>
</feature>
<feature type="compositionally biased region" description="Polar residues" evidence="2">
    <location>
        <begin position="1"/>
        <end position="12"/>
    </location>
</feature>
<feature type="active site" description="Nucleophile" evidence="1">
    <location>
        <position position="190"/>
    </location>
</feature>
<dbReference type="EC" id="3.1.2.-" evidence="1"/>
<dbReference type="EC" id="3.5.1.-" evidence="1"/>
<dbReference type="EC" id="3.5.1.124" evidence="1"/>
<dbReference type="EMBL" id="CP000703">
    <property type="protein sequence ID" value="ABQ48378.1"/>
    <property type="molecule type" value="Genomic_DNA"/>
</dbReference>
<dbReference type="RefSeq" id="WP_000076404.1">
    <property type="nucleotide sequence ID" value="NC_009487.1"/>
</dbReference>
<dbReference type="SMR" id="A5IQA5"/>
<dbReference type="MEROPS" id="C56.006"/>
<dbReference type="KEGG" id="saj:SaurJH9_0574"/>
<dbReference type="HOGENOM" id="CLU_066933_0_0_9"/>
<dbReference type="GO" id="GO:0005737">
    <property type="term" value="C:cytoplasm"/>
    <property type="evidence" value="ECO:0007669"/>
    <property type="project" value="UniProtKB-SubCell"/>
</dbReference>
<dbReference type="GO" id="GO:0019172">
    <property type="term" value="F:glyoxalase III activity"/>
    <property type="evidence" value="ECO:0007669"/>
    <property type="project" value="TreeGrafter"/>
</dbReference>
<dbReference type="GO" id="GO:0036524">
    <property type="term" value="F:protein deglycase activity"/>
    <property type="evidence" value="ECO:0007669"/>
    <property type="project" value="UniProtKB-UniRule"/>
</dbReference>
<dbReference type="GO" id="GO:0016790">
    <property type="term" value="F:thiolester hydrolase activity"/>
    <property type="evidence" value="ECO:0007669"/>
    <property type="project" value="UniProtKB-UniRule"/>
</dbReference>
<dbReference type="GO" id="GO:0006281">
    <property type="term" value="P:DNA repair"/>
    <property type="evidence" value="ECO:0007669"/>
    <property type="project" value="UniProtKB-UniRule"/>
</dbReference>
<dbReference type="GO" id="GO:0019243">
    <property type="term" value="P:methylglyoxal catabolic process to D-lactate via S-lactoyl-glutathione"/>
    <property type="evidence" value="ECO:0007669"/>
    <property type="project" value="TreeGrafter"/>
</dbReference>
<dbReference type="GO" id="GO:0030091">
    <property type="term" value="P:protein repair"/>
    <property type="evidence" value="ECO:0007669"/>
    <property type="project" value="UniProtKB-UniRule"/>
</dbReference>
<dbReference type="CDD" id="cd03148">
    <property type="entry name" value="GATase1_EcHsp31_like"/>
    <property type="match status" value="1"/>
</dbReference>
<dbReference type="Gene3D" id="3.40.50.880">
    <property type="match status" value="1"/>
</dbReference>
<dbReference type="HAMAP" id="MF_01046">
    <property type="entry name" value="Deglycase_HchA"/>
    <property type="match status" value="1"/>
</dbReference>
<dbReference type="InterPro" id="IPR029062">
    <property type="entry name" value="Class_I_gatase-like"/>
</dbReference>
<dbReference type="InterPro" id="IPR002818">
    <property type="entry name" value="DJ-1/PfpI"/>
</dbReference>
<dbReference type="InterPro" id="IPR017283">
    <property type="entry name" value="HchA"/>
</dbReference>
<dbReference type="InterPro" id="IPR050325">
    <property type="entry name" value="Prot/Nucl_acid_deglycase"/>
</dbReference>
<dbReference type="NCBIfam" id="NF003168">
    <property type="entry name" value="PRK04155.1"/>
    <property type="match status" value="1"/>
</dbReference>
<dbReference type="PANTHER" id="PTHR48094">
    <property type="entry name" value="PROTEIN/NUCLEIC ACID DEGLYCASE DJ-1-RELATED"/>
    <property type="match status" value="1"/>
</dbReference>
<dbReference type="PANTHER" id="PTHR48094:SF20">
    <property type="entry name" value="PROTEIN_NUCLEIC ACID DEGLYCASE 1"/>
    <property type="match status" value="1"/>
</dbReference>
<dbReference type="Pfam" id="PF01965">
    <property type="entry name" value="DJ-1_PfpI"/>
    <property type="match status" value="1"/>
</dbReference>
<dbReference type="PIRSF" id="PIRSF037798">
    <property type="entry name" value="Chaperone_HchA"/>
    <property type="match status" value="1"/>
</dbReference>
<dbReference type="SUPFAM" id="SSF52317">
    <property type="entry name" value="Class I glutamine amidotransferase-like"/>
    <property type="match status" value="1"/>
</dbReference>
<keyword id="KW-0963">Cytoplasm</keyword>
<keyword id="KW-0227">DNA damage</keyword>
<keyword id="KW-0234">DNA repair</keyword>
<keyword id="KW-0378">Hydrolase</keyword>
<keyword id="KW-0346">Stress response</keyword>
<gene>
    <name evidence="1" type="primary">hchA</name>
    <name type="ordered locus">SaurJH9_0574</name>
</gene>
<name>HCHA_STAA9</name>